<protein>
    <recommendedName>
        <fullName>Chymotrypsin-like elastase family member 1</fullName>
        <ecNumber>3.4.21.36</ecNumber>
    </recommendedName>
    <alternativeName>
        <fullName>Elastase-1</fullName>
    </alternativeName>
    <alternativeName>
        <fullName>Pancreatic elastase 1</fullName>
    </alternativeName>
</protein>
<comment type="function">
    <text evidence="2">Serine proteases that hydrolyze many proteins in addition to elastin.</text>
</comment>
<comment type="catalytic activity">
    <reaction evidence="2">
        <text>Hydrolysis of proteins, including elastin. Preferential cleavage: Ala-|-Xaa.</text>
        <dbReference type="EC" id="3.4.21.36"/>
    </reaction>
</comment>
<comment type="cofactor">
    <cofactor evidence="1">
        <name>Ca(2+)</name>
        <dbReference type="ChEBI" id="CHEBI:29108"/>
    </cofactor>
    <text evidence="1">Binds 1 Ca(2+) ion per subunit.</text>
</comment>
<comment type="subcellular location">
    <subcellularLocation>
        <location evidence="1">Secreted</location>
    </subcellularLocation>
</comment>
<comment type="tissue specificity">
    <text evidence="5">Basal layers of epidermis (at protein level). Not expressed in the pancreas.</text>
</comment>
<comment type="similarity">
    <text evidence="4">Belongs to the peptidase S1 family. Elastase subfamily.</text>
</comment>
<comment type="caution">
    <text evidence="8">In spite of its original name 'Pancreatic elastase 1', CELA1 is not detected in the pancreas. Elastase activity described in the pancreas may be in fact due to CELA2A (PubMed:10620133).</text>
</comment>
<comment type="sequence caution" evidence="7">
    <conflict type="erroneous gene model prediction">
        <sequence resource="EMBL-CDS" id="AAV88109"/>
    </conflict>
</comment>
<comment type="online information" name="Wikipedia">
    <link uri="https://en.wikipedia.org/wiki/Elastase"/>
    <text>Elastase entry</text>
</comment>
<dbReference type="EC" id="3.4.21.36"/>
<dbReference type="EMBL" id="AF120493">
    <property type="protein sequence ID" value="AAD28441.1"/>
    <property type="molecule type" value="mRNA"/>
</dbReference>
<dbReference type="EMBL" id="AC046135">
    <property type="status" value="NOT_ANNOTATED_CDS"/>
    <property type="molecule type" value="Genomic_DNA"/>
</dbReference>
<dbReference type="EMBL" id="BC069454">
    <property type="protein sequence ID" value="AAH69454.1"/>
    <property type="molecule type" value="mRNA"/>
</dbReference>
<dbReference type="EMBL" id="BC075091">
    <property type="protein sequence ID" value="AAH75091.2"/>
    <property type="molecule type" value="mRNA"/>
</dbReference>
<dbReference type="EMBL" id="AY740424">
    <property type="protein sequence ID" value="AAV88109.1"/>
    <property type="status" value="ALT_SEQ"/>
    <property type="molecule type" value="Genomic_DNA"/>
</dbReference>
<dbReference type="CCDS" id="CCDS8812.1"/>
<dbReference type="RefSeq" id="NP_001962.3">
    <property type="nucleotide sequence ID" value="NM_001971.5"/>
</dbReference>
<dbReference type="SMR" id="Q9UNI1"/>
<dbReference type="BioGRID" id="108305">
    <property type="interactions" value="26"/>
</dbReference>
<dbReference type="FunCoup" id="Q9UNI1">
    <property type="interactions" value="116"/>
</dbReference>
<dbReference type="IntAct" id="Q9UNI1">
    <property type="interactions" value="16"/>
</dbReference>
<dbReference type="STRING" id="9606.ENSP00000293636"/>
<dbReference type="BindingDB" id="Q9UNI1"/>
<dbReference type="ChEMBL" id="CHEMBL3000"/>
<dbReference type="DrugBank" id="DB07955">
    <property type="generic name" value="(2-BROMOETHYL)(2-'FORMYL-4'-AMINOPHENYL) ACETATE"/>
</dbReference>
<dbReference type="DrugBank" id="DB08007">
    <property type="generic name" value="(2R)-3-{[(BENZYLAMINO)CARBONYL]AMINO}-2-HYDROXYPROPANOIC ACID"/>
</dbReference>
<dbReference type="DrugBank" id="DB08640">
    <property type="generic name" value="(2S,3S)-3-FORMYL-2-({[(4-METHYLPHENYL)SULFONYL]AMINO}METHYL)PENTANOIC ACID"/>
</dbReference>
<dbReference type="DrugBank" id="DB08641">
    <property type="generic name" value="(2S,3S)-3-FORMYL-2-({[(4-NITROPHENYL)SULFONYL]AMINO}METHYL)PENTANOIC ACID"/>
</dbReference>
<dbReference type="DrugBank" id="DB06951">
    <property type="generic name" value="(3R)-3-ethyl-N-[(4-methylphenyl)sulfonyl]-L-aspartic acid"/>
</dbReference>
<dbReference type="DrugBank" id="DB07433">
    <property type="generic name" value="(TERT-BUTYLOXYCARBONYL)-ALANYL-AMINO ETHYL-FORMAMIDE"/>
</dbReference>
<dbReference type="DrugBank" id="DB03202">
    <property type="generic name" value="2-[5-Methanesulfonylamino-2-(4-Aminophenyl)-6-Oxo-1,6-Dihydro-1-Pyrimidinyl]-N-(3,3,3-Trifluoro-1-Isopropyl-2-Oxopropyl)Acetamide"/>
</dbReference>
<dbReference type="DrugBank" id="DB08614">
    <property type="generic name" value="3-[[(METHYLAMINO)SULFONYL]AMINO]-2-OXO-6-PHENYL-N-[3,3,3-TRIFLUORO-1-(1-METHYLETHYL)-2-OXOPHENYL]-1(2H)-PYRIDINE ACETAMIDE"/>
</dbReference>
<dbReference type="DrugBank" id="DB07956">
    <property type="generic name" value="[1-(3-CHLORO-2-FORMYL-PHENYLCARBAMOYL)-2-METHYL-PROPYL]-CARBAMIC ACID TERT-BUTYL ESTER"/>
</dbReference>
<dbReference type="DrugBank" id="DB14511">
    <property type="generic name" value="Acetate"/>
</dbReference>
<dbReference type="DrugBank" id="DB02114">
    <property type="generic name" value="Cumidine"/>
</dbReference>
<dbReference type="DrugBank" id="DB05057">
    <property type="generic name" value="Erdosteine"/>
</dbReference>
<dbReference type="DrugBank" id="DB03925">
    <property type="generic name" value="Freselestat"/>
</dbReference>
<dbReference type="DrugBank" id="DB08954">
    <property type="generic name" value="Ifenprodil"/>
</dbReference>
<dbReference type="DrugBank" id="DB02341">
    <property type="generic name" value="Mdl 101,146"/>
</dbReference>
<dbReference type="DrugBank" id="DB07957">
    <property type="generic name" value="METHYL(2-ACETOXY-2-(2-CARBOXY-4-AMINO-PHENYL))ACETATE"/>
</dbReference>
<dbReference type="DrugBank" id="DB01844">
    <property type="generic name" value="N,N-dimethylformamide"/>
</dbReference>
<dbReference type="DrugBank" id="DB03890">
    <property type="generic name" value="N-[2-(1-Formyl-2-Methyl-Propyl)-1-(4-Piperidin-1-Yl-but-2-Enoyl)-Pyrrolidin-3-Yl]-Methanesulfonamide"/>
</dbReference>
<dbReference type="DrugBank" id="DB03702">
    <property type="generic name" value="N-{4-[(Carboxymethyl)carbamoyl]benzoyl}-L-valyl-N-[(3S)-1,1,1-trifluoro-4-methyl-2-oxo-3-pentanyl]-L-prolinamide"/>
</dbReference>
<dbReference type="DrugBank" id="DB03757">
    <property type="generic name" value="N-{[(2-Methyl-2-propanyl)oxy]carbonyl}-L-alanyl-L-alaninamide"/>
</dbReference>
<dbReference type="DrugBank" id="DB12863">
    <property type="generic name" value="Sivelestat"/>
</dbReference>
<dbReference type="DrugCentral" id="Q9UNI1"/>
<dbReference type="GuidetoPHARMACOLOGY" id="2338"/>
<dbReference type="MEROPS" id="S01.153"/>
<dbReference type="GlyCosmos" id="Q9UNI1">
    <property type="glycosylation" value="2 sites, No reported glycans"/>
</dbReference>
<dbReference type="GlyGen" id="Q9UNI1">
    <property type="glycosylation" value="2 sites"/>
</dbReference>
<dbReference type="PhosphoSitePlus" id="Q9UNI1"/>
<dbReference type="BioMuta" id="CELA1"/>
<dbReference type="DMDM" id="62298049"/>
<dbReference type="MassIVE" id="Q9UNI1"/>
<dbReference type="PaxDb" id="9606-ENSP00000293636"/>
<dbReference type="PeptideAtlas" id="Q9UNI1"/>
<dbReference type="ProteomicsDB" id="85297"/>
<dbReference type="Antibodypedia" id="14377">
    <property type="antibodies" value="151 antibodies from 21 providers"/>
</dbReference>
<dbReference type="DNASU" id="1990"/>
<dbReference type="Ensembl" id="ENST00000293636.2">
    <property type="protein sequence ID" value="ENSP00000293636.1"/>
    <property type="gene ID" value="ENSG00000139610.2"/>
</dbReference>
<dbReference type="GeneID" id="1990"/>
<dbReference type="KEGG" id="hsa:1990"/>
<dbReference type="MANE-Select" id="ENST00000293636.2">
    <property type="protein sequence ID" value="ENSP00000293636.1"/>
    <property type="RefSeq nucleotide sequence ID" value="NM_001971.6"/>
    <property type="RefSeq protein sequence ID" value="NP_001962.3"/>
</dbReference>
<dbReference type="UCSC" id="uc001ryi.1">
    <property type="organism name" value="human"/>
</dbReference>
<dbReference type="AGR" id="HGNC:3308"/>
<dbReference type="CTD" id="1990"/>
<dbReference type="DisGeNET" id="1990"/>
<dbReference type="GeneCards" id="CELA1"/>
<dbReference type="HGNC" id="HGNC:3308">
    <property type="gene designation" value="CELA1"/>
</dbReference>
<dbReference type="HPA" id="ENSG00000139610">
    <property type="expression patterns" value="Group enriched (adrenal gland, pancreas)"/>
</dbReference>
<dbReference type="MIM" id="130120">
    <property type="type" value="gene"/>
</dbReference>
<dbReference type="neXtProt" id="NX_Q9UNI1"/>
<dbReference type="OpenTargets" id="ENSG00000139610"/>
<dbReference type="PharmGKB" id="PA27734"/>
<dbReference type="VEuPathDB" id="HostDB:ENSG00000139610"/>
<dbReference type="eggNOG" id="KOG3627">
    <property type="taxonomic scope" value="Eukaryota"/>
</dbReference>
<dbReference type="GeneTree" id="ENSGT01030000234528"/>
<dbReference type="HOGENOM" id="CLU_006842_0_4_1"/>
<dbReference type="InParanoid" id="Q9UNI1"/>
<dbReference type="OMA" id="KQGCNVS"/>
<dbReference type="OrthoDB" id="10061449at2759"/>
<dbReference type="PAN-GO" id="Q9UNI1">
    <property type="GO annotations" value="3 GO annotations based on evolutionary models"/>
</dbReference>
<dbReference type="PhylomeDB" id="Q9UNI1"/>
<dbReference type="TreeFam" id="TF330455"/>
<dbReference type="BRENDA" id="3.4.21.36">
    <property type="organism ID" value="2681"/>
</dbReference>
<dbReference type="PathwayCommons" id="Q9UNI1"/>
<dbReference type="SignaLink" id="Q9UNI1"/>
<dbReference type="BioGRID-ORCS" id="1990">
    <property type="hits" value="35 hits in 1150 CRISPR screens"/>
</dbReference>
<dbReference type="ChiTaRS" id="CELA1">
    <property type="organism name" value="human"/>
</dbReference>
<dbReference type="GeneWiki" id="CELA1"/>
<dbReference type="GenomeRNAi" id="1990"/>
<dbReference type="Pharos" id="Q9UNI1">
    <property type="development level" value="Tchem"/>
</dbReference>
<dbReference type="PRO" id="PR:Q9UNI1"/>
<dbReference type="Proteomes" id="UP000005640">
    <property type="component" value="Chromosome 12"/>
</dbReference>
<dbReference type="RNAct" id="Q9UNI1">
    <property type="molecule type" value="protein"/>
</dbReference>
<dbReference type="Bgee" id="ENSG00000139610">
    <property type="expression patterns" value="Expressed in male germ line stem cell (sensu Vertebrata) in testis and 28 other cell types or tissues"/>
</dbReference>
<dbReference type="GO" id="GO:0005615">
    <property type="term" value="C:extracellular space"/>
    <property type="evidence" value="ECO:0000318"/>
    <property type="project" value="GO_Central"/>
</dbReference>
<dbReference type="GO" id="GO:0046872">
    <property type="term" value="F:metal ion binding"/>
    <property type="evidence" value="ECO:0007669"/>
    <property type="project" value="UniProtKB-KW"/>
</dbReference>
<dbReference type="GO" id="GO:0004252">
    <property type="term" value="F:serine-type endopeptidase activity"/>
    <property type="evidence" value="ECO:0000250"/>
    <property type="project" value="UniProtKB"/>
</dbReference>
<dbReference type="GO" id="GO:0060309">
    <property type="term" value="P:elastin catabolic process"/>
    <property type="evidence" value="ECO:0007669"/>
    <property type="project" value="Ensembl"/>
</dbReference>
<dbReference type="GO" id="GO:0031017">
    <property type="term" value="P:exocrine pancreas development"/>
    <property type="evidence" value="ECO:0007669"/>
    <property type="project" value="Ensembl"/>
</dbReference>
<dbReference type="GO" id="GO:0006954">
    <property type="term" value="P:inflammatory response"/>
    <property type="evidence" value="ECO:0007669"/>
    <property type="project" value="Ensembl"/>
</dbReference>
<dbReference type="GO" id="GO:0035264">
    <property type="term" value="P:multicellular organism growth"/>
    <property type="evidence" value="ECO:0007669"/>
    <property type="project" value="Ensembl"/>
</dbReference>
<dbReference type="GO" id="GO:0000122">
    <property type="term" value="P:negative regulation of transcription by RNA polymerase II"/>
    <property type="evidence" value="ECO:0007669"/>
    <property type="project" value="Ensembl"/>
</dbReference>
<dbReference type="GO" id="GO:0061113">
    <property type="term" value="P:pancreas morphogenesis"/>
    <property type="evidence" value="ECO:0007669"/>
    <property type="project" value="Ensembl"/>
</dbReference>
<dbReference type="GO" id="GO:0045766">
    <property type="term" value="P:positive regulation of angiogenesis"/>
    <property type="evidence" value="ECO:0007669"/>
    <property type="project" value="Ensembl"/>
</dbReference>
<dbReference type="GO" id="GO:0045944">
    <property type="term" value="P:positive regulation of transcription by RNA polymerase II"/>
    <property type="evidence" value="ECO:0007669"/>
    <property type="project" value="Ensembl"/>
</dbReference>
<dbReference type="GO" id="GO:0009791">
    <property type="term" value="P:post-embryonic development"/>
    <property type="evidence" value="ECO:0007669"/>
    <property type="project" value="Ensembl"/>
</dbReference>
<dbReference type="GO" id="GO:0006508">
    <property type="term" value="P:proteolysis"/>
    <property type="evidence" value="ECO:0000318"/>
    <property type="project" value="GO_Central"/>
</dbReference>
<dbReference type="GO" id="GO:0045595">
    <property type="term" value="P:regulation of cell differentiation"/>
    <property type="evidence" value="ECO:0007669"/>
    <property type="project" value="Ensembl"/>
</dbReference>
<dbReference type="GO" id="GO:0042127">
    <property type="term" value="P:regulation of cell population proliferation"/>
    <property type="evidence" value="ECO:0007669"/>
    <property type="project" value="Ensembl"/>
</dbReference>
<dbReference type="GO" id="GO:0048771">
    <property type="term" value="P:tissue remodeling"/>
    <property type="evidence" value="ECO:0007669"/>
    <property type="project" value="Ensembl"/>
</dbReference>
<dbReference type="GO" id="GO:0006366">
    <property type="term" value="P:transcription by RNA polymerase II"/>
    <property type="evidence" value="ECO:0007669"/>
    <property type="project" value="Ensembl"/>
</dbReference>
<dbReference type="GO" id="GO:0016055">
    <property type="term" value="P:Wnt signaling pathway"/>
    <property type="evidence" value="ECO:0007669"/>
    <property type="project" value="Ensembl"/>
</dbReference>
<dbReference type="CDD" id="cd00190">
    <property type="entry name" value="Tryp_SPc"/>
    <property type="match status" value="1"/>
</dbReference>
<dbReference type="FunFam" id="2.40.10.10:FF:000280">
    <property type="match status" value="1"/>
</dbReference>
<dbReference type="FunFam" id="2.40.10.10:FF:000122">
    <property type="entry name" value="Chymotrypsin-like elastase family member 1"/>
    <property type="match status" value="1"/>
</dbReference>
<dbReference type="Gene3D" id="2.40.10.10">
    <property type="entry name" value="Trypsin-like serine proteases"/>
    <property type="match status" value="2"/>
</dbReference>
<dbReference type="InterPro" id="IPR050850">
    <property type="entry name" value="Peptidase_S1_Elastase_sf"/>
</dbReference>
<dbReference type="InterPro" id="IPR009003">
    <property type="entry name" value="Peptidase_S1_PA"/>
</dbReference>
<dbReference type="InterPro" id="IPR043504">
    <property type="entry name" value="Peptidase_S1_PA_chymotrypsin"/>
</dbReference>
<dbReference type="InterPro" id="IPR001314">
    <property type="entry name" value="Peptidase_S1A"/>
</dbReference>
<dbReference type="InterPro" id="IPR001254">
    <property type="entry name" value="Trypsin_dom"/>
</dbReference>
<dbReference type="InterPro" id="IPR018114">
    <property type="entry name" value="TRYPSIN_HIS"/>
</dbReference>
<dbReference type="InterPro" id="IPR033116">
    <property type="entry name" value="TRYPSIN_SER"/>
</dbReference>
<dbReference type="PANTHER" id="PTHR24257">
    <property type="entry name" value="CHYMOTRYPSIN-LIKE ELASTASE FAMILY MEMBER"/>
    <property type="match status" value="1"/>
</dbReference>
<dbReference type="PANTHER" id="PTHR24257:SF0">
    <property type="entry name" value="CHYMOTRYPSIN-LIKE ELASTASE FAMILY MEMBER 1"/>
    <property type="match status" value="1"/>
</dbReference>
<dbReference type="Pfam" id="PF00089">
    <property type="entry name" value="Trypsin"/>
    <property type="match status" value="1"/>
</dbReference>
<dbReference type="PRINTS" id="PR00722">
    <property type="entry name" value="CHYMOTRYPSIN"/>
</dbReference>
<dbReference type="SMART" id="SM00020">
    <property type="entry name" value="Tryp_SPc"/>
    <property type="match status" value="1"/>
</dbReference>
<dbReference type="SUPFAM" id="SSF50494">
    <property type="entry name" value="Trypsin-like serine proteases"/>
    <property type="match status" value="1"/>
</dbReference>
<dbReference type="PROSITE" id="PS50240">
    <property type="entry name" value="TRYPSIN_DOM"/>
    <property type="match status" value="1"/>
</dbReference>
<dbReference type="PROSITE" id="PS00134">
    <property type="entry name" value="TRYPSIN_HIS"/>
    <property type="match status" value="1"/>
</dbReference>
<dbReference type="PROSITE" id="PS00135">
    <property type="entry name" value="TRYPSIN_SER"/>
    <property type="match status" value="1"/>
</dbReference>
<reference key="1">
    <citation type="journal article" date="2000" name="J. Invest. Dermatol.">
        <title>Human elastase 1: evidence for expression in the skin and the identification of a frequent frameshift polymorphism.</title>
        <authorList>
            <person name="Talas U."/>
            <person name="Dunlop J."/>
            <person name="Khalaf S."/>
            <person name="Leigh I.M."/>
            <person name="Kelsell D.P."/>
        </authorList>
    </citation>
    <scope>NUCLEOTIDE SEQUENCE [MRNA]</scope>
    <scope>TISSUE SPECIFICITY</scope>
    <source>
        <tissue>Keratinocyte</tissue>
    </source>
</reference>
<reference key="2">
    <citation type="journal article" date="2006" name="Nature">
        <title>The finished DNA sequence of human chromosome 12.</title>
        <authorList>
            <person name="Scherer S.E."/>
            <person name="Muzny D.M."/>
            <person name="Buhay C.J."/>
            <person name="Chen R."/>
            <person name="Cree A."/>
            <person name="Ding Y."/>
            <person name="Dugan-Rocha S."/>
            <person name="Gill R."/>
            <person name="Gunaratne P."/>
            <person name="Harris R.A."/>
            <person name="Hawes A.C."/>
            <person name="Hernandez J."/>
            <person name="Hodgson A.V."/>
            <person name="Hume J."/>
            <person name="Jackson A."/>
            <person name="Khan Z.M."/>
            <person name="Kovar-Smith C."/>
            <person name="Lewis L.R."/>
            <person name="Lozado R.J."/>
            <person name="Metzker M.L."/>
            <person name="Milosavljevic A."/>
            <person name="Miner G.R."/>
            <person name="Montgomery K.T."/>
            <person name="Morgan M.B."/>
            <person name="Nazareth L.V."/>
            <person name="Scott G."/>
            <person name="Sodergren E."/>
            <person name="Song X.-Z."/>
            <person name="Steffen D."/>
            <person name="Lovering R.C."/>
            <person name="Wheeler D.A."/>
            <person name="Worley K.C."/>
            <person name="Yuan Y."/>
            <person name="Zhang Z."/>
            <person name="Adams C.Q."/>
            <person name="Ansari-Lari M.A."/>
            <person name="Ayele M."/>
            <person name="Brown M.J."/>
            <person name="Chen G."/>
            <person name="Chen Z."/>
            <person name="Clerc-Blankenburg K.P."/>
            <person name="Davis C."/>
            <person name="Delgado O."/>
            <person name="Dinh H.H."/>
            <person name="Draper H."/>
            <person name="Gonzalez-Garay M.L."/>
            <person name="Havlak P."/>
            <person name="Jackson L.R."/>
            <person name="Jacob L.S."/>
            <person name="Kelly S.H."/>
            <person name="Li L."/>
            <person name="Li Z."/>
            <person name="Liu J."/>
            <person name="Liu W."/>
            <person name="Lu J."/>
            <person name="Maheshwari M."/>
            <person name="Nguyen B.-V."/>
            <person name="Okwuonu G.O."/>
            <person name="Pasternak S."/>
            <person name="Perez L.M."/>
            <person name="Plopper F.J.H."/>
            <person name="Santibanez J."/>
            <person name="Shen H."/>
            <person name="Tabor P.E."/>
            <person name="Verduzco D."/>
            <person name="Waldron L."/>
            <person name="Wang Q."/>
            <person name="Williams G.A."/>
            <person name="Zhang J."/>
            <person name="Zhou J."/>
            <person name="Allen C.C."/>
            <person name="Amin A.G."/>
            <person name="Anyalebechi V."/>
            <person name="Bailey M."/>
            <person name="Barbaria J.A."/>
            <person name="Bimage K.E."/>
            <person name="Bryant N.P."/>
            <person name="Burch P.E."/>
            <person name="Burkett C.E."/>
            <person name="Burrell K.L."/>
            <person name="Calderon E."/>
            <person name="Cardenas V."/>
            <person name="Carter K."/>
            <person name="Casias K."/>
            <person name="Cavazos I."/>
            <person name="Cavazos S.R."/>
            <person name="Ceasar H."/>
            <person name="Chacko J."/>
            <person name="Chan S.N."/>
            <person name="Chavez D."/>
            <person name="Christopoulos C."/>
            <person name="Chu J."/>
            <person name="Cockrell R."/>
            <person name="Cox C.D."/>
            <person name="Dang M."/>
            <person name="Dathorne S.R."/>
            <person name="David R."/>
            <person name="Davis C.M."/>
            <person name="Davy-Carroll L."/>
            <person name="Deshazo D.R."/>
            <person name="Donlin J.E."/>
            <person name="D'Souza L."/>
            <person name="Eaves K.A."/>
            <person name="Egan A."/>
            <person name="Emery-Cohen A.J."/>
            <person name="Escotto M."/>
            <person name="Flagg N."/>
            <person name="Forbes L.D."/>
            <person name="Gabisi A.M."/>
            <person name="Garza M."/>
            <person name="Hamilton C."/>
            <person name="Henderson N."/>
            <person name="Hernandez O."/>
            <person name="Hines S."/>
            <person name="Hogues M.E."/>
            <person name="Huang M."/>
            <person name="Idlebird D.G."/>
            <person name="Johnson R."/>
            <person name="Jolivet A."/>
            <person name="Jones S."/>
            <person name="Kagan R."/>
            <person name="King L.M."/>
            <person name="Leal B."/>
            <person name="Lebow H."/>
            <person name="Lee S."/>
            <person name="LeVan J.M."/>
            <person name="Lewis L.C."/>
            <person name="London P."/>
            <person name="Lorensuhewa L.M."/>
            <person name="Loulseged H."/>
            <person name="Lovett D.A."/>
            <person name="Lucier A."/>
            <person name="Lucier R.L."/>
            <person name="Ma J."/>
            <person name="Madu R.C."/>
            <person name="Mapua P."/>
            <person name="Martindale A.D."/>
            <person name="Martinez E."/>
            <person name="Massey E."/>
            <person name="Mawhiney S."/>
            <person name="Meador M.G."/>
            <person name="Mendez S."/>
            <person name="Mercado C."/>
            <person name="Mercado I.C."/>
            <person name="Merritt C.E."/>
            <person name="Miner Z.L."/>
            <person name="Minja E."/>
            <person name="Mitchell T."/>
            <person name="Mohabbat F."/>
            <person name="Mohabbat K."/>
            <person name="Montgomery B."/>
            <person name="Moore N."/>
            <person name="Morris S."/>
            <person name="Munidasa M."/>
            <person name="Ngo R.N."/>
            <person name="Nguyen N.B."/>
            <person name="Nickerson E."/>
            <person name="Nwaokelemeh O.O."/>
            <person name="Nwokenkwo S."/>
            <person name="Obregon M."/>
            <person name="Oguh M."/>
            <person name="Oragunye N."/>
            <person name="Oviedo R.J."/>
            <person name="Parish B.J."/>
            <person name="Parker D.N."/>
            <person name="Parrish J."/>
            <person name="Parks K.L."/>
            <person name="Paul H.A."/>
            <person name="Payton B.A."/>
            <person name="Perez A."/>
            <person name="Perrin W."/>
            <person name="Pickens A."/>
            <person name="Primus E.L."/>
            <person name="Pu L.-L."/>
            <person name="Puazo M."/>
            <person name="Quiles M.M."/>
            <person name="Quiroz J.B."/>
            <person name="Rabata D."/>
            <person name="Reeves K."/>
            <person name="Ruiz S.J."/>
            <person name="Shao H."/>
            <person name="Sisson I."/>
            <person name="Sonaike T."/>
            <person name="Sorelle R.P."/>
            <person name="Sutton A.E."/>
            <person name="Svatek A.F."/>
            <person name="Svetz L.A."/>
            <person name="Tamerisa K.S."/>
            <person name="Taylor T.R."/>
            <person name="Teague B."/>
            <person name="Thomas N."/>
            <person name="Thorn R.D."/>
            <person name="Trejos Z.Y."/>
            <person name="Trevino B.K."/>
            <person name="Ukegbu O.N."/>
            <person name="Urban J.B."/>
            <person name="Vasquez L.I."/>
            <person name="Vera V.A."/>
            <person name="Villasana D.M."/>
            <person name="Wang L."/>
            <person name="Ward-Moore S."/>
            <person name="Warren J.T."/>
            <person name="Wei X."/>
            <person name="White F."/>
            <person name="Williamson A.L."/>
            <person name="Wleczyk R."/>
            <person name="Wooden H.S."/>
            <person name="Wooden S.H."/>
            <person name="Yen J."/>
            <person name="Yoon L."/>
            <person name="Yoon V."/>
            <person name="Zorrilla S.E."/>
            <person name="Nelson D."/>
            <person name="Kucherlapati R."/>
            <person name="Weinstock G."/>
            <person name="Gibbs R.A."/>
        </authorList>
    </citation>
    <scope>NUCLEOTIDE SEQUENCE [LARGE SCALE GENOMIC DNA]</scope>
</reference>
<reference key="3">
    <citation type="journal article" date="2004" name="Genome Res.">
        <title>The status, quality, and expansion of the NIH full-length cDNA project: the Mammalian Gene Collection (MGC).</title>
        <authorList>
            <consortium name="The MGC Project Team"/>
        </authorList>
    </citation>
    <scope>NUCLEOTIDE SEQUENCE [LARGE SCALE MRNA]</scope>
    <source>
        <tissue>Brain</tissue>
    </source>
</reference>
<reference key="4">
    <citation type="submission" date="2004-09" db="EMBL/GenBank/DDBJ databases">
        <authorList>
            <consortium name="NIEHS SNPs program"/>
        </authorList>
    </citation>
    <scope>NUCLEOTIDE SEQUENCE [GENOMIC DNA] OF 1-194</scope>
</reference>
<reference key="5">
    <citation type="journal article" date="2006" name="Science">
        <title>The consensus coding sequences of human breast and colorectal cancers.</title>
        <authorList>
            <person name="Sjoeblom T."/>
            <person name="Jones S."/>
            <person name="Wood L.D."/>
            <person name="Parsons D.W."/>
            <person name="Lin J."/>
            <person name="Barber T.D."/>
            <person name="Mandelker D."/>
            <person name="Leary R.J."/>
            <person name="Ptak J."/>
            <person name="Silliman N."/>
            <person name="Szabo S."/>
            <person name="Buckhaults P."/>
            <person name="Farrell C."/>
            <person name="Meeh P."/>
            <person name="Markowitz S.D."/>
            <person name="Willis J."/>
            <person name="Dawson D."/>
            <person name="Willson J.K.V."/>
            <person name="Gazdar A.F."/>
            <person name="Hartigan J."/>
            <person name="Wu L."/>
            <person name="Liu C."/>
            <person name="Parmigiani G."/>
            <person name="Park B.H."/>
            <person name="Bachman K.E."/>
            <person name="Papadopoulos N."/>
            <person name="Vogelstein B."/>
            <person name="Kinzler K.W."/>
            <person name="Velculescu V.E."/>
        </authorList>
    </citation>
    <scope>VARIANT [LARGE SCALE ANALYSIS] ALA-76</scope>
</reference>
<sequence>MLVLYGHSTQDLPETNARVVGGTEAGRNSWPSQISLQYRSGGSRYHTCGGTLIRQNWVMTAAHCVDYQKTFRVVAGDHNLSQNDGTEQYVSVQKIVVHPYWNSDNVAAGYDIALLRLAQSVTLNSYVQLGVLPQEGAILANNSPCYITGWGKTKTNGQLAQTLQQAYLPSVDYAICSSSSYWGSTVKNTMVCAGGDGVRSGCQGDSGGPLHCLVNGKYSVHGVTSFVSSRGCNVSRKPTVFTQVSAYISWINNVIASN</sequence>
<accession>Q9UNI1</accession>
<accession>Q5MLF0</accession>
<accession>Q6DJT0</accession>
<accession>Q6ISM6</accession>
<gene>
    <name type="primary">CELA1</name>
    <name type="synonym">ELA1</name>
</gene>
<organism>
    <name type="scientific">Homo sapiens</name>
    <name type="common">Human</name>
    <dbReference type="NCBI Taxonomy" id="9606"/>
    <lineage>
        <taxon>Eukaryota</taxon>
        <taxon>Metazoa</taxon>
        <taxon>Chordata</taxon>
        <taxon>Craniata</taxon>
        <taxon>Vertebrata</taxon>
        <taxon>Euteleostomi</taxon>
        <taxon>Mammalia</taxon>
        <taxon>Eutheria</taxon>
        <taxon>Euarchontoglires</taxon>
        <taxon>Primates</taxon>
        <taxon>Haplorrhini</taxon>
        <taxon>Catarrhini</taxon>
        <taxon>Hominidae</taxon>
        <taxon>Homo</taxon>
    </lineage>
</organism>
<feature type="signal peptide" evidence="1">
    <location>
        <begin position="1"/>
        <end position="8"/>
    </location>
</feature>
<feature type="propeptide" id="PRO_0000027677" description="Activation peptide" evidence="1">
    <location>
        <begin position="9"/>
        <end position="18"/>
    </location>
</feature>
<feature type="chain" id="PRO_0000027678" description="Chymotrypsin-like elastase family member 1">
    <location>
        <begin position="19"/>
        <end position="258"/>
    </location>
</feature>
<feature type="domain" description="Peptidase S1" evidence="4">
    <location>
        <begin position="19"/>
        <end position="256"/>
    </location>
</feature>
<feature type="active site" description="Charge relay system" evidence="1">
    <location>
        <position position="63"/>
    </location>
</feature>
<feature type="active site" description="Charge relay system" evidence="1">
    <location>
        <position position="111"/>
    </location>
</feature>
<feature type="active site" description="Charge relay system" evidence="1">
    <location>
        <position position="206"/>
    </location>
</feature>
<feature type="binding site" evidence="1">
    <location>
        <position position="77"/>
    </location>
    <ligand>
        <name>Ca(2+)</name>
        <dbReference type="ChEBI" id="CHEBI:29108"/>
    </ligand>
</feature>
<feature type="binding site" evidence="1">
    <location>
        <position position="79"/>
    </location>
    <ligand>
        <name>Ca(2+)</name>
        <dbReference type="ChEBI" id="CHEBI:29108"/>
    </ligand>
</feature>
<feature type="binding site" evidence="1">
    <location>
        <position position="82"/>
    </location>
    <ligand>
        <name>Ca(2+)</name>
        <dbReference type="ChEBI" id="CHEBI:29108"/>
    </ligand>
</feature>
<feature type="binding site" evidence="1">
    <location>
        <position position="87"/>
    </location>
    <ligand>
        <name>Ca(2+)</name>
        <dbReference type="ChEBI" id="CHEBI:29108"/>
    </ligand>
</feature>
<feature type="glycosylation site" description="N-linked (GlcNAc...) asparagine" evidence="3">
    <location>
        <position position="79"/>
    </location>
</feature>
<feature type="glycosylation site" description="N-linked (GlcNAc...) asparagine" evidence="3">
    <location>
        <position position="233"/>
    </location>
</feature>
<feature type="disulfide bond" evidence="4">
    <location>
        <begin position="48"/>
        <end position="64"/>
    </location>
</feature>
<feature type="disulfide bond" evidence="4">
    <location>
        <begin position="145"/>
        <end position="212"/>
    </location>
</feature>
<feature type="disulfide bond" evidence="4">
    <location>
        <begin position="176"/>
        <end position="192"/>
    </location>
</feature>
<feature type="disulfide bond" evidence="4">
    <location>
        <begin position="202"/>
        <end position="232"/>
    </location>
</feature>
<feature type="sequence variant" id="VAR_033645" description="In dbSNP:rs17860287.">
    <original>Q</original>
    <variation>H</variation>
    <location>
        <position position="10"/>
    </location>
</feature>
<feature type="sequence variant" id="VAR_033646" description="In dbSNP:rs17860299.">
    <original>R</original>
    <variation>W</variation>
    <location>
        <position position="44"/>
    </location>
</feature>
<feature type="sequence variant" id="VAR_033647" description="In dbSNP:rs17860300.">
    <original>M</original>
    <variation>V</variation>
    <location>
        <position position="59"/>
    </location>
</feature>
<feature type="sequence variant" id="VAR_036295" description="In a breast cancer sample; somatic mutation." evidence="6">
    <original>G</original>
    <variation>A</variation>
    <location>
        <position position="76"/>
    </location>
</feature>
<feature type="sequence variant" id="VAR_033648" description="In dbSNP:rs17860364.">
    <original>Q</original>
    <variation>R</variation>
    <location>
        <position position="243"/>
    </location>
</feature>
<feature type="sequence conflict" description="In Ref. 1; AAD28441." evidence="7" ref="1">
    <original>V</original>
    <variation>L</variation>
    <location>
        <position position="220"/>
    </location>
</feature>
<keyword id="KW-0106">Calcium</keyword>
<keyword id="KW-1015">Disulfide bond</keyword>
<keyword id="KW-0325">Glycoprotein</keyword>
<keyword id="KW-0378">Hydrolase</keyword>
<keyword id="KW-0479">Metal-binding</keyword>
<keyword id="KW-0645">Protease</keyword>
<keyword id="KW-1267">Proteomics identification</keyword>
<keyword id="KW-1185">Reference proteome</keyword>
<keyword id="KW-0964">Secreted</keyword>
<keyword id="KW-0720">Serine protease</keyword>
<keyword id="KW-0732">Signal</keyword>
<keyword id="KW-0865">Zymogen</keyword>
<evidence type="ECO:0000250" key="1">
    <source>
        <dbReference type="UniProtKB" id="P00772"/>
    </source>
</evidence>
<evidence type="ECO:0000250" key="2">
    <source>
        <dbReference type="UniProtKB" id="Q91X79"/>
    </source>
</evidence>
<evidence type="ECO:0000255" key="3"/>
<evidence type="ECO:0000255" key="4">
    <source>
        <dbReference type="PROSITE-ProRule" id="PRU00274"/>
    </source>
</evidence>
<evidence type="ECO:0000269" key="5">
    <source>
    </source>
</evidence>
<evidence type="ECO:0000269" key="6">
    <source>
    </source>
</evidence>
<evidence type="ECO:0000305" key="7"/>
<evidence type="ECO:0000305" key="8">
    <source>
    </source>
</evidence>
<name>CELA1_HUMAN</name>
<proteinExistence type="evidence at protein level"/>